<feature type="signal peptide" evidence="3">
    <location>
        <begin position="1"/>
        <end position="25"/>
    </location>
</feature>
<feature type="chain" id="PRO_0000314165" description="Sperm-associated antigen 11A">
    <location>
        <begin position="26"/>
        <end position="123"/>
    </location>
</feature>
<feature type="glycosylation site" description="N-linked (GlcNAc...) asparagine" evidence="3">
    <location>
        <position position="29"/>
    </location>
</feature>
<feature type="splice variant" id="VSP_030220" description="In isoform 2." evidence="4">
    <original>VHISHQEARGPSFKICVGFLGPRWARGCSTGNEKYHLPYAARDLQTFFLPFW</original>
    <variation>GDVPLGIRNTICHMQQGICRLFFCHSGTGQQHRQRCG</variation>
    <location>
        <begin position="72"/>
        <end position="123"/>
    </location>
</feature>
<feature type="splice variant" id="VSP_030221" description="In isoform 3." evidence="4">
    <original>VHISHQEARGPSFKICVGFLGPRWARGCSTGNEKYHLPYAARDLQTFFLPFW</original>
    <variation>GTGQQHRQRCG</variation>
    <location>
        <begin position="72"/>
        <end position="123"/>
    </location>
</feature>
<feature type="splice variant" id="VSP_030222" description="In isoform 4." evidence="4">
    <original>VHI</original>
    <variation>EMK</variation>
    <location>
        <begin position="72"/>
        <end position="74"/>
    </location>
</feature>
<feature type="splice variant" id="VSP_030223" description="In isoform 4." evidence="4">
    <location>
        <begin position="75"/>
        <end position="123"/>
    </location>
</feature>
<feature type="sequence conflict" description="In Ref. 4; AAH58833." evidence="6" ref="4">
    <original>R</original>
    <variation>W</variation>
    <location>
        <position position="60"/>
    </location>
</feature>
<feature type="sequence variant" id="VAR_082918" description="In dbSNP:rs3177011." evidence="6">
    <original>I</original>
    <variation>M</variation>
    <location sequence="Q6PDA7-2">
        <position position="78"/>
    </location>
</feature>
<feature type="sequence conflict" description="In Ref. 1; AAF37188 and 2; AAG21884." evidence="6" ref="1 2">
    <original>L</original>
    <variation>P</variation>
    <location sequence="Q6PDA7-2">
        <position position="76"/>
    </location>
</feature>
<feature type="sequence conflict" description="In Ref. 1; AAF37188 and 2; AAG21884." evidence="6" ref="1 2">
    <original>H</original>
    <variation>R</variation>
    <location sequence="Q6PDA7-2">
        <position position="84"/>
    </location>
</feature>
<evidence type="ECO:0000250" key="1">
    <source>
        <dbReference type="UniProtKB" id="Q8K4N2"/>
    </source>
</evidence>
<evidence type="ECO:0000250" key="2">
    <source>
        <dbReference type="UniProtKB" id="Q8VBV2"/>
    </source>
</evidence>
<evidence type="ECO:0000255" key="3"/>
<evidence type="ECO:0000303" key="4">
    <source>
    </source>
</evidence>
<evidence type="ECO:0000303" key="5">
    <source>
    </source>
</evidence>
<evidence type="ECO:0000305" key="6"/>
<evidence type="ECO:0000312" key="7">
    <source>
        <dbReference type="HGNC" id="HGNC:33342"/>
    </source>
</evidence>
<organism>
    <name type="scientific">Homo sapiens</name>
    <name type="common">Human</name>
    <dbReference type="NCBI Taxonomy" id="9606"/>
    <lineage>
        <taxon>Eukaryota</taxon>
        <taxon>Metazoa</taxon>
        <taxon>Chordata</taxon>
        <taxon>Craniata</taxon>
        <taxon>Vertebrata</taxon>
        <taxon>Euteleostomi</taxon>
        <taxon>Mammalia</taxon>
        <taxon>Eutheria</taxon>
        <taxon>Euarchontoglires</taxon>
        <taxon>Primates</taxon>
        <taxon>Haplorrhini</taxon>
        <taxon>Catarrhini</taxon>
        <taxon>Hominidae</taxon>
        <taxon>Homo</taxon>
    </lineage>
</organism>
<comment type="function">
    <text evidence="2">Has antimicrobial activity against E.coli (By similarity). Plays a role in the defense response in the male reproductive tract, contributing to sperm maturation, storage and protection (By similarity).</text>
</comment>
<comment type="subcellular location">
    <subcellularLocation>
        <location evidence="6">Secreted</location>
    </subcellularLocation>
</comment>
<comment type="alternative products">
    <event type="alternative splicing"/>
    <isoform>
        <id>Q6PDA7-1</id>
        <name>1</name>
        <name>HE2 alpha1</name>
        <sequence type="displayed"/>
    </isoform>
    <isoform>
        <id>Q6PDA7-2</id>
        <name>2</name>
        <name>EP2G</name>
        <name>HE2 beta2</name>
        <sequence type="described" ref="VSP_030220"/>
    </isoform>
    <isoform>
        <id>Q6PDA7-3</id>
        <name>3</name>
        <name>EP2H</name>
        <name>HE2 gamma1</name>
        <sequence type="described" ref="VSP_030221"/>
    </isoform>
    <isoform>
        <id>Q6PDA7-4</id>
        <name>4</name>
        <name>EP2I</name>
        <name>HE2 gamma2</name>
        <sequence type="described" ref="VSP_030222 VSP_030223"/>
    </isoform>
</comment>
<comment type="similarity">
    <text evidence="6">Belongs to the SPAG11 family.</text>
</comment>
<comment type="sequence caution" evidence="6">
    <conflict type="erroneous termination">
        <sequence resource="EMBL" id="AC130365"/>
    </conflict>
    <text>Truncated C-terminus.</text>
</comment>
<proteinExistence type="evidence at protein level"/>
<gene>
    <name evidence="7" type="primary">SPAG11A</name>
    <name evidence="1" type="synonym">BIN1B</name>
    <name evidence="5" type="synonym">EP2</name>
    <name evidence="4" type="synonym">HE2</name>
</gene>
<accession>Q6PDA7</accession>
<accession>A6NIY0</accession>
<accession>E9PAK7</accession>
<sequence>MRQRLLPSVTSLLLVALLFPGSSQARHVNHSATEALGELRERAPGQGTNGFQLLRHAVKRDLLPPRTPPYQVHISHQEARGPSFKICVGFLGPRWARGCSTGNEKYHLPYAARDLQTFFLPFW</sequence>
<keyword id="KW-0025">Alternative splicing</keyword>
<keyword id="KW-0044">Antibiotic</keyword>
<keyword id="KW-0929">Antimicrobial</keyword>
<keyword id="KW-0211">Defensin</keyword>
<keyword id="KW-0325">Glycoprotein</keyword>
<keyword id="KW-1267">Proteomics identification</keyword>
<keyword id="KW-1185">Reference proteome</keyword>
<keyword id="KW-0964">Secreted</keyword>
<keyword id="KW-0732">Signal</keyword>
<dbReference type="EMBL" id="AF168618">
    <property type="protein sequence ID" value="AAF37188.1"/>
    <property type="molecule type" value="mRNA"/>
</dbReference>
<dbReference type="EMBL" id="AF168619">
    <property type="protein sequence ID" value="AAF37189.1"/>
    <property type="molecule type" value="mRNA"/>
</dbReference>
<dbReference type="EMBL" id="AF168620">
    <property type="protein sequence ID" value="AAF37190.1"/>
    <property type="molecule type" value="mRNA"/>
</dbReference>
<dbReference type="EMBL" id="AF170797">
    <property type="protein sequence ID" value="AAF37191.1"/>
    <property type="molecule type" value="mRNA"/>
</dbReference>
<dbReference type="EMBL" id="AY005129">
    <property type="protein sequence ID" value="AAG21884.1"/>
    <property type="molecule type" value="Genomic_DNA"/>
</dbReference>
<dbReference type="EMBL" id="AY005129">
    <property type="protein sequence ID" value="AAG21885.1"/>
    <property type="molecule type" value="Genomic_DNA"/>
</dbReference>
<dbReference type="EMBL" id="AY005129">
    <property type="protein sequence ID" value="AAG21886.1"/>
    <property type="molecule type" value="Genomic_DNA"/>
</dbReference>
<dbReference type="EMBL" id="AC130365">
    <property type="status" value="NOT_ANNOTATED_CDS"/>
    <property type="molecule type" value="Genomic_DNA"/>
</dbReference>
<dbReference type="EMBL" id="BC058833">
    <property type="protein sequence ID" value="AAH58833.2"/>
    <property type="molecule type" value="mRNA"/>
</dbReference>
<dbReference type="CCDS" id="CCDS43700.1">
    <molecule id="Q6PDA7-2"/>
</dbReference>
<dbReference type="RefSeq" id="NP_001075021.2">
    <property type="nucleotide sequence ID" value="NM_001081552.2"/>
</dbReference>
<dbReference type="RefSeq" id="NP_478109.1">
    <molecule id="Q6PDA7-3"/>
    <property type="nucleotide sequence ID" value="NM_058202.2"/>
</dbReference>
<dbReference type="BioGRID" id="115678">
    <property type="interactions" value="3"/>
</dbReference>
<dbReference type="BioGRID" id="575769">
    <property type="interactions" value="43"/>
</dbReference>
<dbReference type="STRING" id="9606.ENSP00000316012"/>
<dbReference type="GlyCosmos" id="Q6PDA7">
    <property type="glycosylation" value="1 site, No reported glycans"/>
</dbReference>
<dbReference type="GlyGen" id="Q6PDA7">
    <property type="glycosylation" value="1 site"/>
</dbReference>
<dbReference type="BioMuta" id="SPAG11A"/>
<dbReference type="DMDM" id="166219773"/>
<dbReference type="MassIVE" id="Q6PDA7"/>
<dbReference type="PaxDb" id="9606-ENSP00000316012"/>
<dbReference type="PeptideAtlas" id="Q6PDA7"/>
<dbReference type="ProteomicsDB" id="19035"/>
<dbReference type="ProteomicsDB" id="67071">
    <molecule id="Q6PDA7-1"/>
</dbReference>
<dbReference type="ProteomicsDB" id="67072">
    <molecule id="Q6PDA7-2"/>
</dbReference>
<dbReference type="Antibodypedia" id="41785">
    <property type="antibodies" value="78 antibodies from 18 providers"/>
</dbReference>
<dbReference type="DNASU" id="10407"/>
<dbReference type="Ensembl" id="ENST00000351436.8">
    <molecule id="Q6PDA7-3"/>
    <property type="protein sequence ID" value="ENSP00000297496.5"/>
    <property type="gene ID" value="ENSG00000178287.18"/>
</dbReference>
<dbReference type="Ensembl" id="ENST00000711409.1">
    <molecule id="Q6PDA7-3"/>
    <property type="protein sequence ID" value="ENSP00000518732.1"/>
    <property type="gene ID" value="ENSG00000288309.2"/>
</dbReference>
<dbReference type="GeneID" id="10407"/>
<dbReference type="GeneID" id="653423"/>
<dbReference type="KEGG" id="hsa:653423"/>
<dbReference type="UCSC" id="uc064kbl.1">
    <molecule id="Q6PDA7-1"/>
    <property type="organism name" value="human"/>
</dbReference>
<dbReference type="AGR" id="HGNC:14534"/>
<dbReference type="AGR" id="HGNC:33342"/>
<dbReference type="CTD" id="10407"/>
<dbReference type="CTD" id="653423"/>
<dbReference type="DisGeNET" id="10407"/>
<dbReference type="DisGeNET" id="653423"/>
<dbReference type="GeneCards" id="SPAG11A"/>
<dbReference type="HGNC" id="HGNC:33342">
    <property type="gene designation" value="SPAG11A"/>
</dbReference>
<dbReference type="HPA" id="ENSG00000178287">
    <property type="expression patterns" value="Tissue enriched (epididymis)"/>
</dbReference>
<dbReference type="MIM" id="606560">
    <property type="type" value="gene"/>
</dbReference>
<dbReference type="neXtProt" id="NX_Q6PDA7"/>
<dbReference type="OpenTargets" id="ENSG00000178287"/>
<dbReference type="PharmGKB" id="PA162404366"/>
<dbReference type="VEuPathDB" id="HostDB:ENSG00000178287"/>
<dbReference type="eggNOG" id="ENOG502TDV0">
    <property type="taxonomic scope" value="Eukaryota"/>
</dbReference>
<dbReference type="GeneTree" id="ENSGT00940000161432"/>
<dbReference type="InParanoid" id="Q6PDA7"/>
<dbReference type="OrthoDB" id="9828952at2759"/>
<dbReference type="PAN-GO" id="Q6PDA7">
    <property type="GO annotations" value="1 GO annotation based on evolutionary models"/>
</dbReference>
<dbReference type="PhylomeDB" id="Q6PDA7"/>
<dbReference type="TreeFam" id="TF338214"/>
<dbReference type="PathwayCommons" id="Q6PDA7"/>
<dbReference type="BioGRID-ORCS" id="10407">
    <property type="hits" value="15 hits in 1026 CRISPR screens"/>
</dbReference>
<dbReference type="BioGRID-ORCS" id="653423">
    <property type="hits" value="11 hits in 672 CRISPR screens"/>
</dbReference>
<dbReference type="ChiTaRS" id="SPAG11A">
    <property type="organism name" value="human"/>
</dbReference>
<dbReference type="Pharos" id="Q6PDA7">
    <property type="development level" value="Tbio"/>
</dbReference>
<dbReference type="PRO" id="PR:Q6PDA7"/>
<dbReference type="Proteomes" id="UP000005640">
    <property type="component" value="Chromosome 8"/>
</dbReference>
<dbReference type="RNAct" id="Q6PDA7">
    <property type="molecule type" value="protein"/>
</dbReference>
<dbReference type="Bgee" id="ENSG00000178287">
    <property type="expression patterns" value="Expressed in male germ line stem cell (sensu Vertebrata) in testis and 43 other cell types or tissues"/>
</dbReference>
<dbReference type="ExpressionAtlas" id="Q6PDA7">
    <property type="expression patterns" value="baseline and differential"/>
</dbReference>
<dbReference type="GO" id="GO:0005576">
    <property type="term" value="C:extracellular region"/>
    <property type="evidence" value="ECO:0007669"/>
    <property type="project" value="UniProtKB-SubCell"/>
</dbReference>
<dbReference type="GO" id="GO:0042742">
    <property type="term" value="P:defense response to bacterium"/>
    <property type="evidence" value="ECO:0007669"/>
    <property type="project" value="UniProtKB-KW"/>
</dbReference>
<dbReference type="InterPro" id="IPR007988">
    <property type="entry name" value="Sperm_Ag_11A_B"/>
</dbReference>
<dbReference type="PANTHER" id="PTHR14081:SF1">
    <property type="entry name" value="SPERM-ASSOCIATED ANTIGEN 11A-RELATED"/>
    <property type="match status" value="1"/>
</dbReference>
<dbReference type="PANTHER" id="PTHR14081">
    <property type="entry name" value="SPERM-ASSOCIATED ANTIGEN 11A-RELATED-RELATED"/>
    <property type="match status" value="1"/>
</dbReference>
<dbReference type="Pfam" id="PF05324">
    <property type="entry name" value="Sperm_Ag_HE2"/>
    <property type="match status" value="1"/>
</dbReference>
<protein>
    <recommendedName>
        <fullName evidence="7">Sperm-associated antigen 11A</fullName>
    </recommendedName>
    <alternativeName>
        <fullName evidence="2">Antimicrobial-like protein Bin-1b</fullName>
    </alternativeName>
    <alternativeName>
        <fullName evidence="4">Human epididymis-specific protein 2</fullName>
        <shortName evidence="4">He2</shortName>
    </alternativeName>
    <alternativeName>
        <fullName evidence="5">Protein EP2</fullName>
    </alternativeName>
    <alternativeName>
        <fullName>Sperm antigen HE2</fullName>
    </alternativeName>
</protein>
<reference key="1">
    <citation type="journal article" date="2000" name="Endocrinology">
        <title>HE2 beta and HE2 gamma, new members of an epididymis-specific family of androgen-regulated proteins in the human.</title>
        <authorList>
            <person name="Hamil K.G."/>
            <person name="Sivashanmugam P."/>
            <person name="Richardson R.T."/>
            <person name="Grossman G."/>
            <person name="Ruben S.M."/>
            <person name="Mohler J.L."/>
            <person name="Petrusz P."/>
            <person name="O'Rand M.G."/>
            <person name="French F.S."/>
            <person name="Hall S.H."/>
        </authorList>
    </citation>
    <scope>NUCLEOTIDE SEQUENCE [MRNA] (ISOFORMS 2 AND 3)</scope>
    <scope>NUCLEOTIDE SEQUENCE [MRNA] OF 22-123 (ISOFORM 4)</scope>
    <scope>NUCLEOTIDE SEQUENCE [MRNA] OF 34-103 (ISOFORM 1)</scope>
</reference>
<reference key="2">
    <citation type="journal article" date="2001" name="Biol. Reprod.">
        <title>Organization of the human gene encoding the epididymis-specific EP2 protein variants and its relationship to defensin genes.</title>
        <authorList>
            <person name="Frohlich O."/>
            <person name="Po C."/>
            <person name="Young L.G."/>
        </authorList>
    </citation>
    <scope>NUCLEOTIDE SEQUENCE [GENOMIC DNA] (ISOFORMS 2 AND 3)</scope>
    <scope>NUCLEOTIDE SEQUENCE [GENOMIC DNA] OF 22-123 (ISOFORM 4)</scope>
</reference>
<reference key="3">
    <citation type="journal article" date="2006" name="Nature">
        <title>DNA sequence and analysis of human chromosome 8.</title>
        <authorList>
            <person name="Nusbaum C."/>
            <person name="Mikkelsen T.S."/>
            <person name="Zody M.C."/>
            <person name="Asakawa S."/>
            <person name="Taudien S."/>
            <person name="Garber M."/>
            <person name="Kodira C.D."/>
            <person name="Schueler M.G."/>
            <person name="Shimizu A."/>
            <person name="Whittaker C.A."/>
            <person name="Chang J.L."/>
            <person name="Cuomo C.A."/>
            <person name="Dewar K."/>
            <person name="FitzGerald M.G."/>
            <person name="Yang X."/>
            <person name="Allen N.R."/>
            <person name="Anderson S."/>
            <person name="Asakawa T."/>
            <person name="Blechschmidt K."/>
            <person name="Bloom T."/>
            <person name="Borowsky M.L."/>
            <person name="Butler J."/>
            <person name="Cook A."/>
            <person name="Corum B."/>
            <person name="DeArellano K."/>
            <person name="DeCaprio D."/>
            <person name="Dooley K.T."/>
            <person name="Dorris L. III"/>
            <person name="Engels R."/>
            <person name="Gloeckner G."/>
            <person name="Hafez N."/>
            <person name="Hagopian D.S."/>
            <person name="Hall J.L."/>
            <person name="Ishikawa S.K."/>
            <person name="Jaffe D.B."/>
            <person name="Kamat A."/>
            <person name="Kudoh J."/>
            <person name="Lehmann R."/>
            <person name="Lokitsang T."/>
            <person name="Macdonald P."/>
            <person name="Major J.E."/>
            <person name="Matthews C.D."/>
            <person name="Mauceli E."/>
            <person name="Menzel U."/>
            <person name="Mihalev A.H."/>
            <person name="Minoshima S."/>
            <person name="Murayama Y."/>
            <person name="Naylor J.W."/>
            <person name="Nicol R."/>
            <person name="Nguyen C."/>
            <person name="O'Leary S.B."/>
            <person name="O'Neill K."/>
            <person name="Parker S.C.J."/>
            <person name="Polley A."/>
            <person name="Raymond C.K."/>
            <person name="Reichwald K."/>
            <person name="Rodriguez J."/>
            <person name="Sasaki T."/>
            <person name="Schilhabel M."/>
            <person name="Siddiqui R."/>
            <person name="Smith C.L."/>
            <person name="Sneddon T.P."/>
            <person name="Talamas J.A."/>
            <person name="Tenzin P."/>
            <person name="Topham K."/>
            <person name="Venkataraman V."/>
            <person name="Wen G."/>
            <person name="Yamazaki S."/>
            <person name="Young S.K."/>
            <person name="Zeng Q."/>
            <person name="Zimmer A.R."/>
            <person name="Rosenthal A."/>
            <person name="Birren B.W."/>
            <person name="Platzer M."/>
            <person name="Shimizu N."/>
            <person name="Lander E.S."/>
        </authorList>
    </citation>
    <scope>NUCLEOTIDE SEQUENCE [LARGE SCALE GENOMIC DNA]</scope>
</reference>
<reference key="4">
    <citation type="journal article" date="2004" name="Genome Res.">
        <title>The status, quality, and expansion of the NIH full-length cDNA project: the Mammalian Gene Collection (MGC).</title>
        <authorList>
            <consortium name="The MGC Project Team"/>
        </authorList>
    </citation>
    <scope>NUCLEOTIDE SEQUENCE [LARGE SCALE MRNA] (ISOFORM 1)</scope>
    <source>
        <tissue>Testis</tissue>
    </source>
</reference>
<name>SG11A_HUMAN</name>